<sequence>MELYQKHLKDVYANFNKLAAVHGETTSNSVTFHVFQQLDSTNLTNYQLENVITQVKELDKGPKDYLYWVILGRCSAHLHVKMLDQLLEEAMIMSDNLHYWESIDKNWYSRVLFLIQSFPTRLYHICRNSIKSILQFQNFSNIFAKKNLFPKVSKSDVLLFPRDAFISQASLLSLIRHEYRGNAKRLRQLRDEHACKIGCLTRAIMSEGVSDAASSSGDKNGISAKADLKQVVSQWIQRLSQLQGQKIDNSESLPDILSITLDNLSHPTDEYFEAKAYFRPSAIERNWPKIFVTLLSAWLSTQIITKNRTSIRLWIDYLYSTAVDFYTNWIQKPILGIFDTIRSNRADSQITLLQTKSLESDMESLQRMVIDFVSDTSPAGINLDLVKQEVQQGDLTYVLQAYEHDLKTPIRTAVSGNLVRTLLIQLQKTKVDVEVALSGIDRLLKSQELVFATVGITPSLIFCYVIIRYVKANIFNNDTLSRAERRQRFRQSLRAAERILVRSQKMNSLDDMSYGLLVFQVNLMAIMSMDMGLSKDVAEDLLQDLEDIQSSSYGVQAQLRAVDRIYRLFKNSI</sequence>
<reference key="1">
    <citation type="journal article" date="2002" name="Nature">
        <title>The genome sequence of Schizosaccharomyces pombe.</title>
        <authorList>
            <person name="Wood V."/>
            <person name="Gwilliam R."/>
            <person name="Rajandream M.A."/>
            <person name="Lyne M.H."/>
            <person name="Lyne R."/>
            <person name="Stewart A."/>
            <person name="Sgouros J.G."/>
            <person name="Peat N."/>
            <person name="Hayles J."/>
            <person name="Baker S.G."/>
            <person name="Basham D."/>
            <person name="Bowman S."/>
            <person name="Brooks K."/>
            <person name="Brown D."/>
            <person name="Brown S."/>
            <person name="Chillingworth T."/>
            <person name="Churcher C.M."/>
            <person name="Collins M."/>
            <person name="Connor R."/>
            <person name="Cronin A."/>
            <person name="Davis P."/>
            <person name="Feltwell T."/>
            <person name="Fraser A."/>
            <person name="Gentles S."/>
            <person name="Goble A."/>
            <person name="Hamlin N."/>
            <person name="Harris D.E."/>
            <person name="Hidalgo J."/>
            <person name="Hodgson G."/>
            <person name="Holroyd S."/>
            <person name="Hornsby T."/>
            <person name="Howarth S."/>
            <person name="Huckle E.J."/>
            <person name="Hunt S."/>
            <person name="Jagels K."/>
            <person name="James K.D."/>
            <person name="Jones L."/>
            <person name="Jones M."/>
            <person name="Leather S."/>
            <person name="McDonald S."/>
            <person name="McLean J."/>
            <person name="Mooney P."/>
            <person name="Moule S."/>
            <person name="Mungall K.L."/>
            <person name="Murphy L.D."/>
            <person name="Niblett D."/>
            <person name="Odell C."/>
            <person name="Oliver K."/>
            <person name="O'Neil S."/>
            <person name="Pearson D."/>
            <person name="Quail M.A."/>
            <person name="Rabbinowitsch E."/>
            <person name="Rutherford K.M."/>
            <person name="Rutter S."/>
            <person name="Saunders D."/>
            <person name="Seeger K."/>
            <person name="Sharp S."/>
            <person name="Skelton J."/>
            <person name="Simmonds M.N."/>
            <person name="Squares R."/>
            <person name="Squares S."/>
            <person name="Stevens K."/>
            <person name="Taylor K."/>
            <person name="Taylor R.G."/>
            <person name="Tivey A."/>
            <person name="Walsh S.V."/>
            <person name="Warren T."/>
            <person name="Whitehead S."/>
            <person name="Woodward J.R."/>
            <person name="Volckaert G."/>
            <person name="Aert R."/>
            <person name="Robben J."/>
            <person name="Grymonprez B."/>
            <person name="Weltjens I."/>
            <person name="Vanstreels E."/>
            <person name="Rieger M."/>
            <person name="Schaefer M."/>
            <person name="Mueller-Auer S."/>
            <person name="Gabel C."/>
            <person name="Fuchs M."/>
            <person name="Duesterhoeft A."/>
            <person name="Fritzc C."/>
            <person name="Holzer E."/>
            <person name="Moestl D."/>
            <person name="Hilbert H."/>
            <person name="Borzym K."/>
            <person name="Langer I."/>
            <person name="Beck A."/>
            <person name="Lehrach H."/>
            <person name="Reinhardt R."/>
            <person name="Pohl T.M."/>
            <person name="Eger P."/>
            <person name="Zimmermann W."/>
            <person name="Wedler H."/>
            <person name="Wambutt R."/>
            <person name="Purnelle B."/>
            <person name="Goffeau A."/>
            <person name="Cadieu E."/>
            <person name="Dreano S."/>
            <person name="Gloux S."/>
            <person name="Lelaure V."/>
            <person name="Mottier S."/>
            <person name="Galibert F."/>
            <person name="Aves S.J."/>
            <person name="Xiang Z."/>
            <person name="Hunt C."/>
            <person name="Moore K."/>
            <person name="Hurst S.M."/>
            <person name="Lucas M."/>
            <person name="Rochet M."/>
            <person name="Gaillardin C."/>
            <person name="Tallada V.A."/>
            <person name="Garzon A."/>
            <person name="Thode G."/>
            <person name="Daga R.R."/>
            <person name="Cruzado L."/>
            <person name="Jimenez J."/>
            <person name="Sanchez M."/>
            <person name="del Rey F."/>
            <person name="Benito J."/>
            <person name="Dominguez A."/>
            <person name="Revuelta J.L."/>
            <person name="Moreno S."/>
            <person name="Armstrong J."/>
            <person name="Forsburg S.L."/>
            <person name="Cerutti L."/>
            <person name="Lowe T."/>
            <person name="McCombie W.R."/>
            <person name="Paulsen I."/>
            <person name="Potashkin J."/>
            <person name="Shpakovski G.V."/>
            <person name="Ussery D."/>
            <person name="Barrell B.G."/>
            <person name="Nurse P."/>
        </authorList>
    </citation>
    <scope>NUCLEOTIDE SEQUENCE [LARGE SCALE GENOMIC DNA]</scope>
    <source>
        <strain>972 / ATCC 24843</strain>
    </source>
</reference>
<reference key="2">
    <citation type="journal article" date="2006" name="Nat. Biotechnol.">
        <title>ORFeome cloning and global analysis of protein localization in the fission yeast Schizosaccharomyces pombe.</title>
        <authorList>
            <person name="Matsuyama A."/>
            <person name="Arai R."/>
            <person name="Yashiroda Y."/>
            <person name="Shirai A."/>
            <person name="Kamata A."/>
            <person name="Sekido S."/>
            <person name="Kobayashi Y."/>
            <person name="Hashimoto A."/>
            <person name="Hamamoto M."/>
            <person name="Hiraoka Y."/>
            <person name="Horinouchi S."/>
            <person name="Yoshida M."/>
        </authorList>
    </citation>
    <scope>SUBCELLULAR LOCATION [LARGE SCALE ANALYSIS]</scope>
</reference>
<keyword id="KW-0472">Membrane</keyword>
<keyword id="KW-0496">Mitochondrion</keyword>
<keyword id="KW-1185">Reference proteome</keyword>
<keyword id="KW-0812">Transmembrane</keyword>
<keyword id="KW-1133">Transmembrane helix</keyword>
<evidence type="ECO:0000250" key="1"/>
<evidence type="ECO:0000255" key="2"/>
<evidence type="ECO:0000305" key="3"/>
<gene>
    <name type="primary">nca2</name>
    <name type="ORF">SPBC4B4.02c</name>
</gene>
<dbReference type="EMBL" id="CU329671">
    <property type="protein sequence ID" value="CAA19282.1"/>
    <property type="molecule type" value="Genomic_DNA"/>
</dbReference>
<dbReference type="PIR" id="T40474">
    <property type="entry name" value="T40474"/>
</dbReference>
<dbReference type="RefSeq" id="NP_596419.1">
    <property type="nucleotide sequence ID" value="NM_001022338.2"/>
</dbReference>
<dbReference type="FunCoup" id="O74963">
    <property type="interactions" value="41"/>
</dbReference>
<dbReference type="STRING" id="284812.O74963"/>
<dbReference type="iPTMnet" id="O74963"/>
<dbReference type="PaxDb" id="4896-SPBC4B4.02c.1"/>
<dbReference type="EnsemblFungi" id="SPBC4B4.02c.1">
    <property type="protein sequence ID" value="SPBC4B4.02c.1:pep"/>
    <property type="gene ID" value="SPBC4B4.02c"/>
</dbReference>
<dbReference type="GeneID" id="2540670"/>
<dbReference type="KEGG" id="spo:2540670"/>
<dbReference type="PomBase" id="SPBC4B4.02c">
    <property type="gene designation" value="nca2"/>
</dbReference>
<dbReference type="VEuPathDB" id="FungiDB:SPBC4B4.02c"/>
<dbReference type="eggNOG" id="ENOG502QTT6">
    <property type="taxonomic scope" value="Eukaryota"/>
</dbReference>
<dbReference type="HOGENOM" id="CLU_008227_1_0_1"/>
<dbReference type="InParanoid" id="O74963"/>
<dbReference type="OMA" id="YHEFHED"/>
<dbReference type="PhylomeDB" id="O74963"/>
<dbReference type="PRO" id="PR:O74963"/>
<dbReference type="Proteomes" id="UP000002485">
    <property type="component" value="Chromosome II"/>
</dbReference>
<dbReference type="GO" id="GO:0005741">
    <property type="term" value="C:mitochondrial outer membrane"/>
    <property type="evidence" value="ECO:0000318"/>
    <property type="project" value="GO_Central"/>
</dbReference>
<dbReference type="GO" id="GO:0005739">
    <property type="term" value="C:mitochondrion"/>
    <property type="evidence" value="ECO:0007005"/>
    <property type="project" value="PomBase"/>
</dbReference>
<dbReference type="GO" id="GO:0090615">
    <property type="term" value="P:mitochondrial mRNA processing"/>
    <property type="evidence" value="ECO:0000266"/>
    <property type="project" value="PomBase"/>
</dbReference>
<dbReference type="InterPro" id="IPR013946">
    <property type="entry name" value="NCA2"/>
</dbReference>
<dbReference type="PANTHER" id="PTHR28234">
    <property type="entry name" value="NUCLEAR CONTROL OF ATPASE PROTEIN 2"/>
    <property type="match status" value="1"/>
</dbReference>
<dbReference type="PANTHER" id="PTHR28234:SF1">
    <property type="entry name" value="NUCLEAR CONTROL OF ATPASE PROTEIN 2"/>
    <property type="match status" value="1"/>
</dbReference>
<dbReference type="Pfam" id="PF08637">
    <property type="entry name" value="NCA2"/>
    <property type="match status" value="1"/>
</dbReference>
<name>NCA2_SCHPO</name>
<feature type="chain" id="PRO_0000374014" description="Nuclear control of ATPase protein 2">
    <location>
        <begin position="1"/>
        <end position="573"/>
    </location>
</feature>
<feature type="transmembrane region" description="Helical" evidence="2">
    <location>
        <begin position="447"/>
        <end position="467"/>
    </location>
</feature>
<feature type="transmembrane region" description="Helical" evidence="2">
    <location>
        <begin position="513"/>
        <end position="533"/>
    </location>
</feature>
<accession>O74963</accession>
<comment type="function">
    <text evidence="1">Involved in the mitochondrial expression of subunits 6 and 8 of the F0-F1 ATP synthase.</text>
</comment>
<comment type="subcellular location">
    <subcellularLocation>
        <location evidence="1">Mitochondrion membrane</location>
        <topology evidence="1">Multi-pass membrane protein</topology>
    </subcellularLocation>
</comment>
<comment type="similarity">
    <text evidence="3">Belongs to the NCA2 family.</text>
</comment>
<protein>
    <recommendedName>
        <fullName>Nuclear control of ATPase protein 2</fullName>
    </recommendedName>
</protein>
<organism>
    <name type="scientific">Schizosaccharomyces pombe (strain 972 / ATCC 24843)</name>
    <name type="common">Fission yeast</name>
    <dbReference type="NCBI Taxonomy" id="284812"/>
    <lineage>
        <taxon>Eukaryota</taxon>
        <taxon>Fungi</taxon>
        <taxon>Dikarya</taxon>
        <taxon>Ascomycota</taxon>
        <taxon>Taphrinomycotina</taxon>
        <taxon>Schizosaccharomycetes</taxon>
        <taxon>Schizosaccharomycetales</taxon>
        <taxon>Schizosaccharomycetaceae</taxon>
        <taxon>Schizosaccharomyces</taxon>
    </lineage>
</organism>
<proteinExistence type="inferred from homology"/>